<accession>Q8MCN7</accession>
<organism>
    <name type="scientific">Trifolium burchellianum</name>
    <name type="common">Wild clover</name>
    <dbReference type="NCBI Taxonomy" id="74508"/>
    <lineage>
        <taxon>Eukaryota</taxon>
        <taxon>Viridiplantae</taxon>
        <taxon>Streptophyta</taxon>
        <taxon>Embryophyta</taxon>
        <taxon>Tracheophyta</taxon>
        <taxon>Spermatophyta</taxon>
        <taxon>Magnoliopsida</taxon>
        <taxon>eudicotyledons</taxon>
        <taxon>Gunneridae</taxon>
        <taxon>Pentapetalae</taxon>
        <taxon>rosids</taxon>
        <taxon>fabids</taxon>
        <taxon>Fabales</taxon>
        <taxon>Fabaceae</taxon>
        <taxon>Papilionoideae</taxon>
        <taxon>50 kb inversion clade</taxon>
        <taxon>NPAAA clade</taxon>
        <taxon>Hologalegina</taxon>
        <taxon>IRL clade</taxon>
        <taxon>Trifolieae</taxon>
        <taxon>Trifolium</taxon>
    </lineage>
</organism>
<dbReference type="EMBL" id="AF522118">
    <property type="protein sequence ID" value="AAM82110.1"/>
    <property type="molecule type" value="Genomic_DNA"/>
</dbReference>
<dbReference type="GO" id="GO:0009507">
    <property type="term" value="C:chloroplast"/>
    <property type="evidence" value="ECO:0007669"/>
    <property type="project" value="UniProtKB-SubCell"/>
</dbReference>
<dbReference type="GO" id="GO:0003723">
    <property type="term" value="F:RNA binding"/>
    <property type="evidence" value="ECO:0007669"/>
    <property type="project" value="UniProtKB-KW"/>
</dbReference>
<dbReference type="GO" id="GO:0006397">
    <property type="term" value="P:mRNA processing"/>
    <property type="evidence" value="ECO:0007669"/>
    <property type="project" value="UniProtKB-KW"/>
</dbReference>
<dbReference type="GO" id="GO:0008380">
    <property type="term" value="P:RNA splicing"/>
    <property type="evidence" value="ECO:0007669"/>
    <property type="project" value="UniProtKB-UniRule"/>
</dbReference>
<dbReference type="GO" id="GO:0008033">
    <property type="term" value="P:tRNA processing"/>
    <property type="evidence" value="ECO:0007669"/>
    <property type="project" value="UniProtKB-KW"/>
</dbReference>
<dbReference type="HAMAP" id="MF_01390">
    <property type="entry name" value="MatK"/>
    <property type="match status" value="1"/>
</dbReference>
<dbReference type="InterPro" id="IPR024937">
    <property type="entry name" value="Domain_X"/>
</dbReference>
<dbReference type="InterPro" id="IPR002866">
    <property type="entry name" value="Maturase_MatK"/>
</dbReference>
<dbReference type="InterPro" id="IPR024942">
    <property type="entry name" value="Maturase_MatK_N"/>
</dbReference>
<dbReference type="PANTHER" id="PTHR34811">
    <property type="entry name" value="MATURASE K"/>
    <property type="match status" value="1"/>
</dbReference>
<dbReference type="PANTHER" id="PTHR34811:SF1">
    <property type="entry name" value="MATURASE K"/>
    <property type="match status" value="1"/>
</dbReference>
<dbReference type="Pfam" id="PF01348">
    <property type="entry name" value="Intron_maturas2"/>
    <property type="match status" value="1"/>
</dbReference>
<dbReference type="Pfam" id="PF01824">
    <property type="entry name" value="MatK_N"/>
    <property type="match status" value="1"/>
</dbReference>
<reference key="1">
    <citation type="book" date="2003" name="Advances in legume systematics - part 10">
        <title>Phylogenetic analyses of tribes Trifolieae and Vicieae based on sequences of the plastid gene matK (Papilionoideae: Leguminosae).</title>
        <editorList>
            <person name="Klitgaard B.B."/>
            <person name="Bruneau A."/>
        </editorList>
        <authorList>
            <person name="Steele K.P."/>
            <person name="Wojciechowski M.F."/>
        </authorList>
    </citation>
    <scope>NUCLEOTIDE SEQUENCE [GENOMIC DNA]</scope>
</reference>
<name>MATK_TRIBU</name>
<comment type="function">
    <text evidence="1">Usually encoded in the trnK tRNA gene intron. Probably assists in splicing its own and other chloroplast group II introns.</text>
</comment>
<comment type="subcellular location">
    <subcellularLocation>
        <location>Plastid</location>
        <location>Chloroplast</location>
    </subcellularLocation>
</comment>
<comment type="similarity">
    <text evidence="1">Belongs to the intron maturase 2 family. MatK subfamily.</text>
</comment>
<keyword id="KW-0150">Chloroplast</keyword>
<keyword id="KW-0507">mRNA processing</keyword>
<keyword id="KW-0934">Plastid</keyword>
<keyword id="KW-0694">RNA-binding</keyword>
<keyword id="KW-0819">tRNA processing</keyword>
<feature type="chain" id="PRO_0000143743" description="Maturase K">
    <location>
        <begin position="1"/>
        <end position="511"/>
    </location>
</feature>
<gene>
    <name evidence="1" type="primary">matK</name>
</gene>
<sequence>MKEYRVYLERARFFQQDFLYPLIFREYIYGLAYSHKDPRSIFVENGGYDNKYSLLNVKRLITRMYQQNHLIISTNDSNKNPFFGYNKNFDFQIIAEGFAILVEIPFLPQLSSSLEEAEIIKSYKNVRSIHSIFPFLEDKFTYLNYVSDIRIPYPIHLEILVQILRYWVKDVSFFHLLRLFLYDFSNWIPTKKSISTFSKSNPRLFLFLYNFYVCEYESIFLFLRNKSSHLRLKSFSVFFERIFFYAKREHLVEVFSKDFSYTLPFFKDPNIHYVRYQGKCILASKNVPFLMNKWNHYFIHLWQCFFDVWSQPRTININQLSEHSFQLLGYFSNVRLNRSVVRSQMLQNTFLIEIVSKKLDIIVPFIPLIRSLAKAKFCNVLGHPISKPVWADSSDFDIIERFLRICRNLCHYYHGSSTKKSLYRIKYILRLSCIKTLACKHKSTVRAFLNRSGSEELLEEFFTEEEEILPWKFQILTLLCHSQSFSLHRYERKYRIWYLDILFSNDLVNDE</sequence>
<proteinExistence type="inferred from homology"/>
<geneLocation type="chloroplast"/>
<protein>
    <recommendedName>
        <fullName evidence="1">Maturase K</fullName>
    </recommendedName>
    <alternativeName>
        <fullName evidence="1">Intron maturase</fullName>
    </alternativeName>
</protein>
<evidence type="ECO:0000255" key="1">
    <source>
        <dbReference type="HAMAP-Rule" id="MF_01390"/>
    </source>
</evidence>